<evidence type="ECO:0000255" key="1">
    <source>
        <dbReference type="HAMAP-Rule" id="MF_00706"/>
    </source>
</evidence>
<reference key="1">
    <citation type="submission" date="2008-02" db="EMBL/GenBank/DDBJ databases">
        <title>Complete sequence of Pseudomonas putida W619.</title>
        <authorList>
            <person name="Copeland A."/>
            <person name="Lucas S."/>
            <person name="Lapidus A."/>
            <person name="Barry K."/>
            <person name="Detter J.C."/>
            <person name="Glavina del Rio T."/>
            <person name="Dalin E."/>
            <person name="Tice H."/>
            <person name="Pitluck S."/>
            <person name="Chain P."/>
            <person name="Malfatti S."/>
            <person name="Shin M."/>
            <person name="Vergez L."/>
            <person name="Schmutz J."/>
            <person name="Larimer F."/>
            <person name="Land M."/>
            <person name="Hauser L."/>
            <person name="Kyrpides N."/>
            <person name="Kim E."/>
            <person name="Taghavi S."/>
            <person name="Vangronsveld D."/>
            <person name="van der Lelie D."/>
            <person name="Richardson P."/>
        </authorList>
    </citation>
    <scope>NUCLEOTIDE SEQUENCE [LARGE SCALE GENOMIC DNA]</scope>
    <source>
        <strain>W619</strain>
    </source>
</reference>
<keyword id="KW-1015">Disulfide bond</keyword>
<keyword id="KW-0574">Periplasm</keyword>
<keyword id="KW-0646">Protease inhibitor</keyword>
<keyword id="KW-0722">Serine protease inhibitor</keyword>
<keyword id="KW-0732">Signal</keyword>
<dbReference type="EMBL" id="CP000949">
    <property type="protein sequence ID" value="ACA73211.1"/>
    <property type="molecule type" value="Genomic_DNA"/>
</dbReference>
<dbReference type="SMR" id="B1J8K6"/>
<dbReference type="STRING" id="390235.PputW619_2719"/>
<dbReference type="MEROPS" id="I11.001"/>
<dbReference type="KEGG" id="ppw:PputW619_2719"/>
<dbReference type="eggNOG" id="COG4574">
    <property type="taxonomic scope" value="Bacteria"/>
</dbReference>
<dbReference type="HOGENOM" id="CLU_111565_0_0_6"/>
<dbReference type="OrthoDB" id="997196at2"/>
<dbReference type="GO" id="GO:0042597">
    <property type="term" value="C:periplasmic space"/>
    <property type="evidence" value="ECO:0007669"/>
    <property type="project" value="UniProtKB-SubCell"/>
</dbReference>
<dbReference type="GO" id="GO:0004867">
    <property type="term" value="F:serine-type endopeptidase inhibitor activity"/>
    <property type="evidence" value="ECO:0007669"/>
    <property type="project" value="UniProtKB-UniRule"/>
</dbReference>
<dbReference type="CDD" id="cd00242">
    <property type="entry name" value="Ecotin"/>
    <property type="match status" value="1"/>
</dbReference>
<dbReference type="Gene3D" id="2.60.40.550">
    <property type="entry name" value="Ecotin"/>
    <property type="match status" value="1"/>
</dbReference>
<dbReference type="Gene3D" id="4.10.1230.10">
    <property type="entry name" value="Ecotin, trypsin inhibitor"/>
    <property type="match status" value="1"/>
</dbReference>
<dbReference type="HAMAP" id="MF_00706">
    <property type="entry name" value="Ecotin"/>
    <property type="match status" value="1"/>
</dbReference>
<dbReference type="InterPro" id="IPR027438">
    <property type="entry name" value="Ecotin_C"/>
</dbReference>
<dbReference type="InterPro" id="IPR036198">
    <property type="entry name" value="Ecotin_sf"/>
</dbReference>
<dbReference type="InterPro" id="IPR005658">
    <property type="entry name" value="Prot_inh_ecotin"/>
</dbReference>
<dbReference type="InterPro" id="IPR023084">
    <property type="entry name" value="Prot_inh_ecotin_gammaproteobac"/>
</dbReference>
<dbReference type="NCBIfam" id="NF002987">
    <property type="entry name" value="PRK03719.1"/>
    <property type="match status" value="1"/>
</dbReference>
<dbReference type="PANTHER" id="PTHR35890">
    <property type="match status" value="1"/>
</dbReference>
<dbReference type="PANTHER" id="PTHR35890:SF3">
    <property type="entry name" value="ECOTIN"/>
    <property type="match status" value="1"/>
</dbReference>
<dbReference type="Pfam" id="PF03974">
    <property type="entry name" value="Ecotin"/>
    <property type="match status" value="1"/>
</dbReference>
<dbReference type="PIRSF" id="PIRSF006865">
    <property type="entry name" value="Prot_inh_ecotin"/>
    <property type="match status" value="1"/>
</dbReference>
<dbReference type="SUPFAM" id="SSF49772">
    <property type="entry name" value="Ecotin, trypsin inhibitor"/>
    <property type="match status" value="1"/>
</dbReference>
<name>ECOT_PSEPW</name>
<organism>
    <name type="scientific">Pseudomonas putida (strain W619)</name>
    <dbReference type="NCBI Taxonomy" id="390235"/>
    <lineage>
        <taxon>Bacteria</taxon>
        <taxon>Pseudomonadati</taxon>
        <taxon>Pseudomonadota</taxon>
        <taxon>Gammaproteobacteria</taxon>
        <taxon>Pseudomonadales</taxon>
        <taxon>Pseudomonadaceae</taxon>
        <taxon>Pseudomonas</taxon>
    </lineage>
</organism>
<gene>
    <name evidence="1" type="primary">eco</name>
    <name type="ordered locus">PputW619_2719</name>
</gene>
<feature type="signal peptide" evidence="1">
    <location>
        <begin position="1"/>
        <end position="22"/>
    </location>
</feature>
<feature type="chain" id="PRO_5000315041" description="Ecotin">
    <location>
        <begin position="23"/>
        <end position="159"/>
    </location>
</feature>
<feature type="site" description="Reactive bond" evidence="1">
    <location>
        <begin position="102"/>
        <end position="103"/>
    </location>
</feature>
<feature type="disulfide bond" evidence="1">
    <location>
        <begin position="68"/>
        <end position="105"/>
    </location>
</feature>
<proteinExistence type="inferred from homology"/>
<protein>
    <recommendedName>
        <fullName evidence="1">Ecotin</fullName>
    </recommendedName>
</protein>
<accession>B1J8K6</accession>
<sequence length="159" mass="17440">MRPTPLSTILALTMAATAPAMAASLKDVAPYPEAEKGFTRQVIHLPAQADEQAYKLEILAGKTLQVDCNRQRLAGSLEEHTLEGWGYNYYRLDKVGGPASTLMACPDGKKTEAFVPVVGEGFLLRYNSKLPVVVYVPDGVQVRYRVWSASQDVQKAKVE</sequence>
<comment type="function">
    <text evidence="1">General inhibitor of family S1 serine proteases.</text>
</comment>
<comment type="subunit">
    <text evidence="1">Homodimer.</text>
</comment>
<comment type="subcellular location">
    <subcellularLocation>
        <location evidence="1">Periplasm</location>
    </subcellularLocation>
</comment>
<comment type="similarity">
    <text evidence="1">Belongs to the protease inhibitor I11 (ecotin) family.</text>
</comment>